<organism>
    <name type="scientific">Rattus norvegicus</name>
    <name type="common">Rat</name>
    <dbReference type="NCBI Taxonomy" id="10116"/>
    <lineage>
        <taxon>Eukaryota</taxon>
        <taxon>Metazoa</taxon>
        <taxon>Chordata</taxon>
        <taxon>Craniata</taxon>
        <taxon>Vertebrata</taxon>
        <taxon>Euteleostomi</taxon>
        <taxon>Mammalia</taxon>
        <taxon>Eutheria</taxon>
        <taxon>Euarchontoglires</taxon>
        <taxon>Glires</taxon>
        <taxon>Rodentia</taxon>
        <taxon>Myomorpha</taxon>
        <taxon>Muroidea</taxon>
        <taxon>Muridae</taxon>
        <taxon>Murinae</taxon>
        <taxon>Rattus</taxon>
    </lineage>
</organism>
<keyword id="KW-0012">Acyltransferase</keyword>
<keyword id="KW-1003">Cell membrane</keyword>
<keyword id="KW-0391">Immunity</keyword>
<keyword id="KW-0399">Innate immunity</keyword>
<keyword id="KW-0445">Lipid transport</keyword>
<keyword id="KW-0449">Lipoprotein</keyword>
<keyword id="KW-0472">Membrane</keyword>
<keyword id="KW-0488">Methylation</keyword>
<keyword id="KW-0564">Palmitate</keyword>
<keyword id="KW-0597">Phosphoprotein</keyword>
<keyword id="KW-1185">Reference proteome</keyword>
<keyword id="KW-0808">Transferase</keyword>
<keyword id="KW-0812">Transmembrane</keyword>
<keyword id="KW-1133">Transmembrane helix</keyword>
<keyword id="KW-0813">Transport</keyword>
<gene>
    <name type="primary">Zdhhc5</name>
</gene>
<name>ZDHC5_RAT</name>
<proteinExistence type="evidence at protein level"/>
<sequence>MPAESGKRFKPSKYVPVSAAAIFLVGATTLFFAFTCPGLSLDVSPAVPIYNAIMFLFVLANFSMATFMDPGIFPRAEEDEDKEDDFRAPLYKTVEIKGIQVRMKWCATCRFYRPPRCSHCSVCDNCVEEFDHHCPWVNNCIGRRNYRYFFLFLLSLTAHIMGVFGFGLLYVLCHIEELSGVRTAVTMAVMCVAGLFFIPVAGLTGFHVVLVARGRTTNEQVTGKFRGGVNPFTNGCCNNVSRVLCSSPAPRYLGRPKKEKTIVIRPPFLRPEVSDGQITVKIMDNGIQGELRRTKSKGSLEITESQSADAEPPPPPKPDLSRYTGLRTHLSLATNEDSSLLGKDSPPTPTMYKYRPGYSSSSTSAAMPHSSSAKLSRGDSLKEPTSIADSSRHPSYRSEPSLEPESFRSPTFGKSFHFDPLSSGSRSSSLKSAQGTGFELGQLQSIRSEGTTSTSYKSLANQTRNGSLSYDSLLTPSDSPDFESVQAGPEPDPPLGYTSPFLSARLAQQREAERHPRLLPTGPPHREPSPVRYDNLSRHIVASLQEREKLLRQSPPLAGREEEPGLGDSGIQSTPGSGHAPRTSSSSDDSKRSPLSKTPLGRPAVPRFGKPDGLRGRGLGSPEPGTTAPYLGRSMSYSSQKAPSGVSETEEVALQPLLTPKDEVQLKTTYSKSNGQPKSIGSASPGPGQPPLSSPTRGGVKKVSGVGGTTYEISV</sequence>
<feature type="chain" id="PRO_0000418364" description="Palmitoyltransferase ZDHHC5">
    <location>
        <begin position="1"/>
        <end position="715"/>
    </location>
</feature>
<feature type="topological domain" description="Cytoplasmic" evidence="4">
    <location>
        <begin position="1"/>
        <end position="13"/>
    </location>
</feature>
<feature type="transmembrane region" description="Helical" evidence="4">
    <location>
        <begin position="14"/>
        <end position="34"/>
    </location>
</feature>
<feature type="topological domain" description="Extracellular" evidence="4">
    <location>
        <begin position="35"/>
        <end position="52"/>
    </location>
</feature>
<feature type="transmembrane region" description="Helical" evidence="4">
    <location>
        <begin position="53"/>
        <end position="73"/>
    </location>
</feature>
<feature type="topological domain" description="Cytoplasmic" evidence="4">
    <location>
        <begin position="74"/>
        <end position="148"/>
    </location>
</feature>
<feature type="transmembrane region" description="Helical" evidence="4">
    <location>
        <begin position="149"/>
        <end position="169"/>
    </location>
</feature>
<feature type="topological domain" description="Extracellular" evidence="4">
    <location>
        <begin position="170"/>
        <end position="191"/>
    </location>
</feature>
<feature type="transmembrane region" description="Helical" evidence="4">
    <location>
        <begin position="192"/>
        <end position="212"/>
    </location>
</feature>
<feature type="topological domain" description="Cytoplasmic" evidence="4">
    <location>
        <begin position="213"/>
        <end position="715"/>
    </location>
</feature>
<feature type="domain" description="DHHC" evidence="5">
    <location>
        <begin position="104"/>
        <end position="154"/>
    </location>
</feature>
<feature type="region of interest" description="Disordered" evidence="6">
    <location>
        <begin position="289"/>
        <end position="715"/>
    </location>
</feature>
<feature type="compositionally biased region" description="Low complexity" evidence="6">
    <location>
        <begin position="359"/>
        <end position="373"/>
    </location>
</feature>
<feature type="compositionally biased region" description="Low complexity" evidence="6">
    <location>
        <begin position="422"/>
        <end position="432"/>
    </location>
</feature>
<feature type="compositionally biased region" description="Polar residues" evidence="6">
    <location>
        <begin position="442"/>
        <end position="478"/>
    </location>
</feature>
<feature type="compositionally biased region" description="Low complexity" evidence="6">
    <location>
        <begin position="581"/>
        <end position="597"/>
    </location>
</feature>
<feature type="compositionally biased region" description="Polar residues" evidence="6">
    <location>
        <begin position="666"/>
        <end position="677"/>
    </location>
</feature>
<feature type="active site" description="S-palmitoyl cysteine intermediate" evidence="2">
    <location>
        <position position="134"/>
    </location>
</feature>
<feature type="modified residue" description="Phosphotyrosine" evidence="2">
    <location>
        <position position="91"/>
    </location>
</feature>
<feature type="modified residue" description="Phosphoserine" evidence="3">
    <location>
        <position position="247"/>
    </location>
</feature>
<feature type="modified residue" description="Phosphothreonine" evidence="2">
    <location>
        <position position="294"/>
    </location>
</feature>
<feature type="modified residue" description="Phosphoserine" evidence="3">
    <location>
        <position position="296"/>
    </location>
</feature>
<feature type="modified residue" description="Phosphoserine" evidence="3">
    <location>
        <position position="299"/>
    </location>
</feature>
<feature type="modified residue" description="Phosphothreonine" evidence="2">
    <location>
        <position position="303"/>
    </location>
</feature>
<feature type="modified residue" description="Phosphoserine" evidence="3">
    <location>
        <position position="345"/>
    </location>
</feature>
<feature type="modified residue" description="Phosphothreonine" evidence="3">
    <location>
        <position position="348"/>
    </location>
</feature>
<feature type="modified residue" description="Phosphothreonine" evidence="2">
    <location>
        <position position="350"/>
    </location>
</feature>
<feature type="modified residue" description="Phosphoserine" evidence="9">
    <location>
        <position position="380"/>
    </location>
</feature>
<feature type="modified residue" description="Phosphoserine" evidence="3">
    <location>
        <position position="398"/>
    </location>
</feature>
<feature type="modified residue" description="Phosphoserine" evidence="3">
    <location>
        <position position="406"/>
    </location>
</feature>
<feature type="modified residue" description="Phosphoserine" evidence="3">
    <location>
        <position position="409"/>
    </location>
</feature>
<feature type="modified residue" description="Phosphothreonine" evidence="3">
    <location>
        <position position="411"/>
    </location>
</feature>
<feature type="modified residue" description="Phosphoserine" evidence="3">
    <location>
        <position position="415"/>
    </location>
</feature>
<feature type="modified residue" description="Phosphoserine" evidence="9">
    <location>
        <position position="425"/>
    </location>
</feature>
<feature type="modified residue" description="Phosphoserine" evidence="2">
    <location>
        <position position="429"/>
    </location>
</feature>
<feature type="modified residue" description="Phosphoserine" evidence="3">
    <location>
        <position position="432"/>
    </location>
</feature>
<feature type="modified residue" description="Phosphothreonine" evidence="3">
    <location>
        <position position="436"/>
    </location>
</feature>
<feature type="modified residue" description="Phosphoserine" evidence="3">
    <location>
        <position position="529"/>
    </location>
</feature>
<feature type="modified residue" description="Phosphoserine" evidence="9">
    <location>
        <position position="554"/>
    </location>
</feature>
<feature type="modified residue" description="Omega-N-methylarginine" evidence="3">
    <location>
        <position position="617"/>
    </location>
</feature>
<feature type="modified residue" description="Phosphoserine" evidence="9">
    <location>
        <position position="621"/>
    </location>
</feature>
<feature type="modified residue" description="Phosphothreonine" evidence="3">
    <location>
        <position position="659"/>
    </location>
</feature>
<feature type="modified residue" description="Phosphoserine" evidence="3">
    <location>
        <position position="684"/>
    </location>
</feature>
<feature type="modified residue" description="Phosphoserine" evidence="3">
    <location>
        <position position="694"/>
    </location>
</feature>
<feature type="modified residue" description="Omega-N-methylarginine" evidence="2">
    <location>
        <position position="697"/>
    </location>
</feature>
<accession>Q2THW7</accession>
<dbReference type="EC" id="2.3.1.225" evidence="2"/>
<dbReference type="EMBL" id="AY871203">
    <property type="protein sequence ID" value="AAX68536.1"/>
    <property type="molecule type" value="mRNA"/>
</dbReference>
<dbReference type="RefSeq" id="NP_001034427.1">
    <property type="nucleotide sequence ID" value="NM_001039338.1"/>
</dbReference>
<dbReference type="RefSeq" id="XP_017447385.1">
    <property type="nucleotide sequence ID" value="XM_017591896.3"/>
</dbReference>
<dbReference type="RefSeq" id="XP_017447386.1">
    <property type="nucleotide sequence ID" value="XM_017591897.3"/>
</dbReference>
<dbReference type="RefSeq" id="XP_017447387.1">
    <property type="nucleotide sequence ID" value="XM_017591898.3"/>
</dbReference>
<dbReference type="RefSeq" id="XP_063140208.1">
    <property type="nucleotide sequence ID" value="XM_063284138.1"/>
</dbReference>
<dbReference type="SMR" id="Q2THW7"/>
<dbReference type="FunCoup" id="Q2THW7">
    <property type="interactions" value="2065"/>
</dbReference>
<dbReference type="STRING" id="10116.ENSRNOP00000009708"/>
<dbReference type="GlyGen" id="Q2THW7">
    <property type="glycosylation" value="2 sites"/>
</dbReference>
<dbReference type="iPTMnet" id="Q2THW7"/>
<dbReference type="PhosphoSitePlus" id="Q2THW7"/>
<dbReference type="SwissPalm" id="Q2THW7"/>
<dbReference type="PaxDb" id="10116-ENSRNOP00000009708"/>
<dbReference type="Ensembl" id="ENSRNOT00000009708.6">
    <property type="protein sequence ID" value="ENSRNOP00000009708.4"/>
    <property type="gene ID" value="ENSRNOG00000006832.7"/>
</dbReference>
<dbReference type="GeneID" id="362156"/>
<dbReference type="KEGG" id="rno:362156"/>
<dbReference type="UCSC" id="RGD:1589737">
    <property type="organism name" value="rat"/>
</dbReference>
<dbReference type="AGR" id="RGD:1589737"/>
<dbReference type="CTD" id="25921"/>
<dbReference type="RGD" id="1589737">
    <property type="gene designation" value="Zdhhc5"/>
</dbReference>
<dbReference type="eggNOG" id="KOG1311">
    <property type="taxonomic scope" value="Eukaryota"/>
</dbReference>
<dbReference type="GeneTree" id="ENSGT00940000156001"/>
<dbReference type="HOGENOM" id="CLU_013779_0_0_1"/>
<dbReference type="InParanoid" id="Q2THW7"/>
<dbReference type="OMA" id="KMTRGES"/>
<dbReference type="OrthoDB" id="4096362at2759"/>
<dbReference type="PhylomeDB" id="Q2THW7"/>
<dbReference type="TreeFam" id="TF354263"/>
<dbReference type="BRENDA" id="2.3.1.225">
    <property type="organism ID" value="5301"/>
</dbReference>
<dbReference type="PRO" id="PR:Q2THW7"/>
<dbReference type="Proteomes" id="UP000002494">
    <property type="component" value="Chromosome 3"/>
</dbReference>
<dbReference type="Bgee" id="ENSRNOG00000006832">
    <property type="expression patterns" value="Expressed in esophagus and 18 other cell types or tissues"/>
</dbReference>
<dbReference type="GO" id="GO:0030425">
    <property type="term" value="C:dendrite"/>
    <property type="evidence" value="ECO:0000314"/>
    <property type="project" value="RGD"/>
</dbReference>
<dbReference type="GO" id="GO:0098982">
    <property type="term" value="C:GABA-ergic synapse"/>
    <property type="evidence" value="ECO:0000314"/>
    <property type="project" value="SynGO"/>
</dbReference>
<dbReference type="GO" id="GO:0098978">
    <property type="term" value="C:glutamatergic synapse"/>
    <property type="evidence" value="ECO:0000314"/>
    <property type="project" value="SynGO"/>
</dbReference>
<dbReference type="GO" id="GO:0005654">
    <property type="term" value="C:nucleoplasm"/>
    <property type="evidence" value="ECO:0007669"/>
    <property type="project" value="Ensembl"/>
</dbReference>
<dbReference type="GO" id="GO:0045335">
    <property type="term" value="C:phagocytic vesicle"/>
    <property type="evidence" value="ECO:0000266"/>
    <property type="project" value="RGD"/>
</dbReference>
<dbReference type="GO" id="GO:0005886">
    <property type="term" value="C:plasma membrane"/>
    <property type="evidence" value="ECO:0000266"/>
    <property type="project" value="RGD"/>
</dbReference>
<dbReference type="GO" id="GO:0098794">
    <property type="term" value="C:postsynapse"/>
    <property type="evidence" value="ECO:0000266"/>
    <property type="project" value="RGD"/>
</dbReference>
<dbReference type="GO" id="GO:0099091">
    <property type="term" value="C:postsynaptic specialization, intracellular component"/>
    <property type="evidence" value="ECO:0000314"/>
    <property type="project" value="SynGO"/>
</dbReference>
<dbReference type="GO" id="GO:0016409">
    <property type="term" value="F:palmitoyltransferase activity"/>
    <property type="evidence" value="ECO:0000266"/>
    <property type="project" value="RGD"/>
</dbReference>
<dbReference type="GO" id="GO:0019706">
    <property type="term" value="F:protein-cysteine S-palmitoyltransferase activity"/>
    <property type="evidence" value="ECO:0000250"/>
    <property type="project" value="UniProtKB"/>
</dbReference>
<dbReference type="GO" id="GO:0045087">
    <property type="term" value="P:innate immune response"/>
    <property type="evidence" value="ECO:0007669"/>
    <property type="project" value="UniProtKB-KW"/>
</dbReference>
<dbReference type="GO" id="GO:0006869">
    <property type="term" value="P:lipid transport"/>
    <property type="evidence" value="ECO:0007669"/>
    <property type="project" value="UniProtKB-KW"/>
</dbReference>
<dbReference type="GO" id="GO:1900227">
    <property type="term" value="P:positive regulation of NLRP3 inflammasome complex assembly"/>
    <property type="evidence" value="ECO:0000266"/>
    <property type="project" value="RGD"/>
</dbReference>
<dbReference type="GO" id="GO:0062208">
    <property type="term" value="P:positive regulation of pattern recognition receptor signaling pathway"/>
    <property type="evidence" value="ECO:0000266"/>
    <property type="project" value="RGD"/>
</dbReference>
<dbReference type="GO" id="GO:1905171">
    <property type="term" value="P:positive regulation of protein localization to phagocytic vesicle"/>
    <property type="evidence" value="ECO:0000266"/>
    <property type="project" value="RGD"/>
</dbReference>
<dbReference type="GO" id="GO:1903078">
    <property type="term" value="P:positive regulation of protein localization to plasma membrane"/>
    <property type="evidence" value="ECO:0000266"/>
    <property type="project" value="RGD"/>
</dbReference>
<dbReference type="GO" id="GO:0140639">
    <property type="term" value="P:positive regulation of pyroptotic inflammatory response"/>
    <property type="evidence" value="ECO:0000250"/>
    <property type="project" value="UniProtKB"/>
</dbReference>
<dbReference type="GO" id="GO:0072659">
    <property type="term" value="P:protein localization to plasma membrane"/>
    <property type="evidence" value="ECO:0000266"/>
    <property type="project" value="RGD"/>
</dbReference>
<dbReference type="GO" id="GO:0099072">
    <property type="term" value="P:regulation of postsynaptic membrane neurotransmitter receptor levels"/>
    <property type="evidence" value="ECO:0000314"/>
    <property type="project" value="SynGO"/>
</dbReference>
<dbReference type="InterPro" id="IPR001594">
    <property type="entry name" value="Palmitoyltrfase_DHHC"/>
</dbReference>
<dbReference type="PANTHER" id="PTHR12349">
    <property type="entry name" value="ANKYRIN REPEAT AND LEM DOMAIN-CONTAINING PROTEIN 2"/>
    <property type="match status" value="1"/>
</dbReference>
<dbReference type="PANTHER" id="PTHR12349:SF3">
    <property type="entry name" value="PALMITOYLTRANSFERASE ZDHHC5"/>
    <property type="match status" value="1"/>
</dbReference>
<dbReference type="Pfam" id="PF01529">
    <property type="entry name" value="DHHC"/>
    <property type="match status" value="1"/>
</dbReference>
<dbReference type="PROSITE" id="PS50216">
    <property type="entry name" value="DHHC"/>
    <property type="match status" value="1"/>
</dbReference>
<reference key="1">
    <citation type="submission" date="2004-12" db="EMBL/GenBank/DDBJ databases">
        <title>A superfamily of membrane-associated DHHC type zinc finger proteins.</title>
        <authorList>
            <person name="Chen Y."/>
            <person name="Huang C.-H."/>
        </authorList>
    </citation>
    <scope>NUCLEOTIDE SEQUENCE [MRNA]</scope>
</reference>
<reference key="2">
    <citation type="journal article" date="2011" name="FEBS Lett.">
        <title>Somatostatin receptor 5 is palmitoylated by the interacting ZDHHC5 palmitoyltransferase.</title>
        <authorList>
            <person name="Kokkola T."/>
            <person name="Kruse C."/>
            <person name="Roy-Pogodzik E.M."/>
            <person name="Pekkinen J."/>
            <person name="Bauch C."/>
            <person name="Honck H.H."/>
            <person name="Hennemann H."/>
            <person name="Kreienkamp H.J."/>
        </authorList>
    </citation>
    <scope>INTERACTION WITH SSTR5</scope>
</reference>
<reference key="3">
    <citation type="journal article" date="2012" name="Nat. Commun.">
        <title>Quantitative maps of protein phosphorylation sites across 14 different rat organs and tissues.</title>
        <authorList>
            <person name="Lundby A."/>
            <person name="Secher A."/>
            <person name="Lage K."/>
            <person name="Nordsborg N.B."/>
            <person name="Dmytriyev A."/>
            <person name="Lundby C."/>
            <person name="Olsen J.V."/>
        </authorList>
    </citation>
    <scope>PHOSPHORYLATION [LARGE SCALE ANALYSIS] AT SER-380; SER-425; SER-554 AND SER-621</scope>
    <scope>IDENTIFICATION BY MASS SPECTROMETRY [LARGE SCALE ANALYSIS]</scope>
</reference>
<reference key="4">
    <citation type="journal article" date="2020" name="Biophys. J.">
        <title>DHHC5 Mediates beta-Adrenergic Signaling in Cardiomyocytes by Targeting Galpha Proteins.</title>
        <authorList>
            <person name="Chen J.J."/>
            <person name="Marsden A.N."/>
            <person name="Scott C.A."/>
            <person name="Akimzhanov A.M."/>
            <person name="Boehning D."/>
        </authorList>
    </citation>
    <scope>PALMITOYLATION</scope>
    <scope>FUNCTION</scope>
    <scope>SUBCELLULAR LOCATION</scope>
</reference>
<protein>
    <recommendedName>
        <fullName>Palmitoyltransferase ZDHHC5</fullName>
        <ecNumber evidence="2">2.3.1.225</ecNumber>
    </recommendedName>
    <alternativeName>
        <fullName>Zinc finger DHHC domain-containing protein 5</fullName>
        <shortName>DHHC-5</shortName>
    </alternativeName>
</protein>
<evidence type="ECO:0000250" key="1">
    <source>
        <dbReference type="UniProtKB" id="Q8IUH5"/>
    </source>
</evidence>
<evidence type="ECO:0000250" key="2">
    <source>
        <dbReference type="UniProtKB" id="Q8VDZ4"/>
    </source>
</evidence>
<evidence type="ECO:0000250" key="3">
    <source>
        <dbReference type="UniProtKB" id="Q9C0B5"/>
    </source>
</evidence>
<evidence type="ECO:0000255" key="4"/>
<evidence type="ECO:0000255" key="5">
    <source>
        <dbReference type="PROSITE-ProRule" id="PRU00067"/>
    </source>
</evidence>
<evidence type="ECO:0000256" key="6">
    <source>
        <dbReference type="SAM" id="MobiDB-lite"/>
    </source>
</evidence>
<evidence type="ECO:0000269" key="7">
    <source>
    </source>
</evidence>
<evidence type="ECO:0000305" key="8"/>
<evidence type="ECO:0007744" key="9">
    <source>
    </source>
</evidence>
<comment type="function">
    <text evidence="2 3 7">Palmitoyltransferase that catalyzes the addition of palmitate onto various protein substrates such as CTNND2, CD36, GSDMD, NLRP3, NOD1, NOD2, STAT3 and S1PR1 thus plays a role in various biological processes including cell adhesion, inflammation, fatty acid uptake, bacterial sensing or cardiac functions (PubMed:31547976). Plays an important role in the regulation of synapse efficacy by mediating palmitoylation of delta-catenin/CTNND2, thereby increasing synaptic delivery and surface stabilization of alpha-amino-3-hydroxy-5-methyl-4-isoxazole propionic acid receptors (AMPARs) (By similarity). Under basal conditions, remains at the synaptic membrane through FYN-mediated phosphorylation that prevents association with endocytic proteins (By similarity). Neuronal activity enhances the internalization and trafficking of DHHC5 from spines to dendritic shafts where it palmitoylates delta-catenin/CTNND2 (By similarity). Regulates cell adhesion at the plasma membrane by palmitoylating GOLGA7B and DSG2 (By similarity). Plays a role in innate immune response by mediating the palmitoylation of NOD1 and NOD2 and their proper recruitment to the bacterial entry site and phagosomes (By similarity). Also participates in fatty acid uptake by palmitoylating CD36 and thereby targeting it to the plasma membrane (By similarity). Upon binding of fatty acids to CD36, gets phosphorylated by LYN leading to inactivation and subsequent CD36 caveolar endocytosis (By similarity). Controls oligodendrocyte development by catalyzing STAT3 palmitoylation (By similarity). Acts as a regulator of inflammatory response by mediating palmitoylation of NLRP3 and GSDMD (By similarity). Palmitoylates NLRP3 to promote inflammasome assembly and activation (By similarity). Activates pyroptosis by catalyzing palmitoylation of gasdermin-D (GSDMD), thereby promoting membrane translocation and pore formation of GSDMD (By similarity).</text>
</comment>
<comment type="catalytic activity">
    <reaction evidence="2">
        <text>L-cysteinyl-[protein] + hexadecanoyl-CoA = S-hexadecanoyl-L-cysteinyl-[protein] + CoA</text>
        <dbReference type="Rhea" id="RHEA:36683"/>
        <dbReference type="Rhea" id="RHEA-COMP:10131"/>
        <dbReference type="Rhea" id="RHEA-COMP:11032"/>
        <dbReference type="ChEBI" id="CHEBI:29950"/>
        <dbReference type="ChEBI" id="CHEBI:57287"/>
        <dbReference type="ChEBI" id="CHEBI:57379"/>
        <dbReference type="ChEBI" id="CHEBI:74151"/>
        <dbReference type="EC" id="2.3.1.225"/>
    </reaction>
    <physiologicalReaction direction="left-to-right" evidence="2">
        <dbReference type="Rhea" id="RHEA:36684"/>
    </physiologicalReaction>
</comment>
<comment type="subcellular location">
    <subcellularLocation>
        <location evidence="7">Cell membrane</location>
        <topology evidence="4">Multi-pass membrane protein</topology>
    </subcellularLocation>
</comment>
<comment type="domain">
    <text evidence="1">The DHHC domain is required for palmitoyltransferase activity.</text>
</comment>
<comment type="PTM">
    <text evidence="3 7">Autopalmitoylated (By similarity). Palmitoylation of the C-terminal tail regulates stimulation-dependent plasma membrane motility (PubMed:31547976).</text>
</comment>
<comment type="PTM">
    <text evidence="3">Phosphorylation regulates association with endocytic proteins and its subcellular localization. Phosphorylation by LYN during fatty acid uptake leads to inactivation of the activity.</text>
</comment>
<comment type="similarity">
    <text evidence="8">Belongs to the DHHC palmitoyltransferase family. ERF2/ZDHHC9 subfamily.</text>
</comment>